<name>FATA2_ARATH</name>
<feature type="transit peptide" description="Chloroplast" evidence="1">
    <location>
        <begin position="1"/>
        <end position="48"/>
    </location>
</feature>
<feature type="chain" id="PRO_0000418154" description="Oleoyl-acyl carrier protein thioesterase 2, chloroplastic">
    <location>
        <begin position="49"/>
        <end position="367"/>
    </location>
</feature>
<feature type="active site" evidence="1">
    <location>
        <position position="263"/>
    </location>
</feature>
<feature type="active site" evidence="1">
    <location>
        <position position="265"/>
    </location>
</feature>
<feature type="active site" evidence="1">
    <location>
        <position position="300"/>
    </location>
</feature>
<protein>
    <recommendedName>
        <fullName>Oleoyl-acyl carrier protein thioesterase 2, chloroplastic</fullName>
        <ecNumber>3.1.2.14</ecNumber>
    </recommendedName>
    <alternativeName>
        <fullName>18:0-acyl-carrier protein thioesterase</fullName>
        <shortName>18:0-ACP thioesterase</shortName>
    </alternativeName>
    <alternativeName>
        <fullName>Acyl-[acyl-carrier-protein] hydrolase</fullName>
    </alternativeName>
</protein>
<comment type="function">
    <text evidence="2">Plays an essential role in chain termination during de novo fatty acid synthesis. Possesses high thioesterase activity for oleoyl-ACP versus other acyl-ACPs.</text>
</comment>
<comment type="catalytic activity">
    <reaction>
        <text>(9Z)-octadecenoyl-[ACP] + H2O = (9Z)-octadecenoate + holo-[ACP] + H(+)</text>
        <dbReference type="Rhea" id="RHEA:15057"/>
        <dbReference type="Rhea" id="RHEA-COMP:9685"/>
        <dbReference type="Rhea" id="RHEA-COMP:9924"/>
        <dbReference type="ChEBI" id="CHEBI:15377"/>
        <dbReference type="ChEBI" id="CHEBI:15378"/>
        <dbReference type="ChEBI" id="CHEBI:30823"/>
        <dbReference type="ChEBI" id="CHEBI:64479"/>
        <dbReference type="ChEBI" id="CHEBI:78783"/>
        <dbReference type="EC" id="3.1.2.14"/>
    </reaction>
</comment>
<comment type="subcellular location">
    <subcellularLocation>
        <location evidence="3">Plastid</location>
        <location evidence="3">Chloroplast</location>
    </subcellularLocation>
</comment>
<comment type="similarity">
    <text evidence="3">Belongs to the acyl-ACP thioesterase family.</text>
</comment>
<evidence type="ECO:0000255" key="1"/>
<evidence type="ECO:0000269" key="2">
    <source>
    </source>
</evidence>
<evidence type="ECO:0000305" key="3"/>
<gene>
    <name type="primary">FATA2</name>
    <name type="ordered locus">At4g13050</name>
    <name type="ORF">F25G13.140</name>
</gene>
<sequence length="367" mass="42231">MLKLSCNVTDHIHNLFSNSRRIFVPVHRQTRPISCFQLKKEPLRAILSADHGNSSVRVADTVSGTSPADRLRFGRLMEDGFSYKEKFIVRSYEVGINKTATIETIANLLQEVACNHVQNVGFSTDGFATTLTMRKLHLIWVTARMHIEIYKYPAWSDVVEIETWCQSEGRIGTRRDWILKDCATGEVIGRATSKWVMMNQDTRRLQRVTDEVRDEYLVFCPPEPRLAFPEENNSSLKKIPKLEDPAQYSMLGLKPRRADLDMNQHVNNVTYIGWVLESIPQEIIDTHELKVITLDYRRECQQDDIVDSLTTSETPNEVVSKLTGTNGSTTSSKREHNESHFLHILRLSENGQEINRGRTQWRKKSSR</sequence>
<reference key="1">
    <citation type="journal article" date="1999" name="Nature">
        <title>Sequence and analysis of chromosome 4 of the plant Arabidopsis thaliana.</title>
        <authorList>
            <person name="Mayer K.F.X."/>
            <person name="Schueller C."/>
            <person name="Wambutt R."/>
            <person name="Murphy G."/>
            <person name="Volckaert G."/>
            <person name="Pohl T."/>
            <person name="Duesterhoeft A."/>
            <person name="Stiekema W."/>
            <person name="Entian K.-D."/>
            <person name="Terryn N."/>
            <person name="Harris B."/>
            <person name="Ansorge W."/>
            <person name="Brandt P."/>
            <person name="Grivell L.A."/>
            <person name="Rieger M."/>
            <person name="Weichselgartner M."/>
            <person name="de Simone V."/>
            <person name="Obermaier B."/>
            <person name="Mache R."/>
            <person name="Mueller M."/>
            <person name="Kreis M."/>
            <person name="Delseny M."/>
            <person name="Puigdomenech P."/>
            <person name="Watson M."/>
            <person name="Schmidtheini T."/>
            <person name="Reichert B."/>
            <person name="Portetelle D."/>
            <person name="Perez-Alonso M."/>
            <person name="Boutry M."/>
            <person name="Bancroft I."/>
            <person name="Vos P."/>
            <person name="Hoheisel J."/>
            <person name="Zimmermann W."/>
            <person name="Wedler H."/>
            <person name="Ridley P."/>
            <person name="Langham S.-A."/>
            <person name="McCullagh B."/>
            <person name="Bilham L."/>
            <person name="Robben J."/>
            <person name="van der Schueren J."/>
            <person name="Grymonprez B."/>
            <person name="Chuang Y.-J."/>
            <person name="Vandenbussche F."/>
            <person name="Braeken M."/>
            <person name="Weltjens I."/>
            <person name="Voet M."/>
            <person name="Bastiaens I."/>
            <person name="Aert R."/>
            <person name="Defoor E."/>
            <person name="Weitzenegger T."/>
            <person name="Bothe G."/>
            <person name="Ramsperger U."/>
            <person name="Hilbert H."/>
            <person name="Braun M."/>
            <person name="Holzer E."/>
            <person name="Brandt A."/>
            <person name="Peters S."/>
            <person name="van Staveren M."/>
            <person name="Dirkse W."/>
            <person name="Mooijman P."/>
            <person name="Klein Lankhorst R."/>
            <person name="Rose M."/>
            <person name="Hauf J."/>
            <person name="Koetter P."/>
            <person name="Berneiser S."/>
            <person name="Hempel S."/>
            <person name="Feldpausch M."/>
            <person name="Lamberth S."/>
            <person name="Van den Daele H."/>
            <person name="De Keyser A."/>
            <person name="Buysshaert C."/>
            <person name="Gielen J."/>
            <person name="Villarroel R."/>
            <person name="De Clercq R."/>
            <person name="van Montagu M."/>
            <person name="Rogers J."/>
            <person name="Cronin A."/>
            <person name="Quail M.A."/>
            <person name="Bray-Allen S."/>
            <person name="Clark L."/>
            <person name="Doggett J."/>
            <person name="Hall S."/>
            <person name="Kay M."/>
            <person name="Lennard N."/>
            <person name="McLay K."/>
            <person name="Mayes R."/>
            <person name="Pettett A."/>
            <person name="Rajandream M.A."/>
            <person name="Lyne M."/>
            <person name="Benes V."/>
            <person name="Rechmann S."/>
            <person name="Borkova D."/>
            <person name="Bloecker H."/>
            <person name="Scharfe M."/>
            <person name="Grimm M."/>
            <person name="Loehnert T.-H."/>
            <person name="Dose S."/>
            <person name="de Haan M."/>
            <person name="Maarse A.C."/>
            <person name="Schaefer M."/>
            <person name="Mueller-Auer S."/>
            <person name="Gabel C."/>
            <person name="Fuchs M."/>
            <person name="Fartmann B."/>
            <person name="Granderath K."/>
            <person name="Dauner D."/>
            <person name="Herzl A."/>
            <person name="Neumann S."/>
            <person name="Argiriou A."/>
            <person name="Vitale D."/>
            <person name="Liguori R."/>
            <person name="Piravandi E."/>
            <person name="Massenet O."/>
            <person name="Quigley F."/>
            <person name="Clabauld G."/>
            <person name="Muendlein A."/>
            <person name="Felber R."/>
            <person name="Schnabl S."/>
            <person name="Hiller R."/>
            <person name="Schmidt W."/>
            <person name="Lecharny A."/>
            <person name="Aubourg S."/>
            <person name="Chefdor F."/>
            <person name="Cooke R."/>
            <person name="Berger C."/>
            <person name="Monfort A."/>
            <person name="Casacuberta E."/>
            <person name="Gibbons T."/>
            <person name="Weber N."/>
            <person name="Vandenbol M."/>
            <person name="Bargues M."/>
            <person name="Terol J."/>
            <person name="Torres A."/>
            <person name="Perez-Perez A."/>
            <person name="Purnelle B."/>
            <person name="Bent E."/>
            <person name="Johnson S."/>
            <person name="Tacon D."/>
            <person name="Jesse T."/>
            <person name="Heijnen L."/>
            <person name="Schwarz S."/>
            <person name="Scholler P."/>
            <person name="Heber S."/>
            <person name="Francs P."/>
            <person name="Bielke C."/>
            <person name="Frishman D."/>
            <person name="Haase D."/>
            <person name="Lemcke K."/>
            <person name="Mewes H.-W."/>
            <person name="Stocker S."/>
            <person name="Zaccaria P."/>
            <person name="Bevan M."/>
            <person name="Wilson R.K."/>
            <person name="de la Bastide M."/>
            <person name="Habermann K."/>
            <person name="Parnell L."/>
            <person name="Dedhia N."/>
            <person name="Gnoj L."/>
            <person name="Schutz K."/>
            <person name="Huang E."/>
            <person name="Spiegel L."/>
            <person name="Sekhon M."/>
            <person name="Murray J."/>
            <person name="Sheet P."/>
            <person name="Cordes M."/>
            <person name="Abu-Threideh J."/>
            <person name="Stoneking T."/>
            <person name="Kalicki J."/>
            <person name="Graves T."/>
            <person name="Harmon G."/>
            <person name="Edwards J."/>
            <person name="Latreille P."/>
            <person name="Courtney L."/>
            <person name="Cloud J."/>
            <person name="Abbott A."/>
            <person name="Scott K."/>
            <person name="Johnson D."/>
            <person name="Minx P."/>
            <person name="Bentley D."/>
            <person name="Fulton B."/>
            <person name="Miller N."/>
            <person name="Greco T."/>
            <person name="Kemp K."/>
            <person name="Kramer J."/>
            <person name="Fulton L."/>
            <person name="Mardis E."/>
            <person name="Dante M."/>
            <person name="Pepin K."/>
            <person name="Hillier L.W."/>
            <person name="Nelson J."/>
            <person name="Spieth J."/>
            <person name="Ryan E."/>
            <person name="Andrews S."/>
            <person name="Geisel C."/>
            <person name="Layman D."/>
            <person name="Du H."/>
            <person name="Ali J."/>
            <person name="Berghoff A."/>
            <person name="Jones K."/>
            <person name="Drone K."/>
            <person name="Cotton M."/>
            <person name="Joshu C."/>
            <person name="Antonoiu B."/>
            <person name="Zidanic M."/>
            <person name="Strong C."/>
            <person name="Sun H."/>
            <person name="Lamar B."/>
            <person name="Yordan C."/>
            <person name="Ma P."/>
            <person name="Zhong J."/>
            <person name="Preston R."/>
            <person name="Vil D."/>
            <person name="Shekher M."/>
            <person name="Matero A."/>
            <person name="Shah R."/>
            <person name="Swaby I.K."/>
            <person name="O'Shaughnessy A."/>
            <person name="Rodriguez M."/>
            <person name="Hoffman J."/>
            <person name="Till S."/>
            <person name="Granat S."/>
            <person name="Shohdy N."/>
            <person name="Hasegawa A."/>
            <person name="Hameed A."/>
            <person name="Lodhi M."/>
            <person name="Johnson A."/>
            <person name="Chen E."/>
            <person name="Marra M.A."/>
            <person name="Martienssen R."/>
            <person name="McCombie W.R."/>
        </authorList>
    </citation>
    <scope>NUCLEOTIDE SEQUENCE [LARGE SCALE GENOMIC DNA]</scope>
    <source>
        <strain>cv. Columbia</strain>
    </source>
</reference>
<reference key="2">
    <citation type="journal article" date="2017" name="Plant J.">
        <title>Araport11: a complete reannotation of the Arabidopsis thaliana reference genome.</title>
        <authorList>
            <person name="Cheng C.Y."/>
            <person name="Krishnakumar V."/>
            <person name="Chan A.P."/>
            <person name="Thibaud-Nissen F."/>
            <person name="Schobel S."/>
            <person name="Town C.D."/>
        </authorList>
    </citation>
    <scope>GENOME REANNOTATION</scope>
    <source>
        <strain>cv. Columbia</strain>
    </source>
</reference>
<reference key="3">
    <citation type="submission" date="2006-03" db="EMBL/GenBank/DDBJ databases">
        <title>Arabidopsis ORF clones.</title>
        <authorList>
            <person name="Shinn P."/>
            <person name="Chen H."/>
            <person name="Kim C.J."/>
            <person name="Ecker J.R."/>
        </authorList>
    </citation>
    <scope>NUCLEOTIDE SEQUENCE [LARGE SCALE MRNA]</scope>
</reference>
<reference key="4">
    <citation type="journal article" date="2002" name="Science">
        <title>Functional annotation of a full-length Arabidopsis cDNA collection.</title>
        <authorList>
            <person name="Seki M."/>
            <person name="Narusaka M."/>
            <person name="Kamiya A."/>
            <person name="Ishida J."/>
            <person name="Satou M."/>
            <person name="Sakurai T."/>
            <person name="Nakajima M."/>
            <person name="Enju A."/>
            <person name="Akiyama K."/>
            <person name="Oono Y."/>
            <person name="Muramatsu M."/>
            <person name="Hayashizaki Y."/>
            <person name="Kawai J."/>
            <person name="Carninci P."/>
            <person name="Itoh M."/>
            <person name="Ishii Y."/>
            <person name="Arakawa T."/>
            <person name="Shibata K."/>
            <person name="Shinagawa A."/>
            <person name="Shinozaki K."/>
        </authorList>
    </citation>
    <scope>NUCLEOTIDE SEQUENCE [LARGE SCALE MRNA] OF 1-155</scope>
    <source>
        <strain>cv. Columbia</strain>
    </source>
</reference>
<reference key="5">
    <citation type="journal article" date="2012" name="Planta">
        <title>Reduced expression of FatA thioesterases in Arabidopsis affects the oil content and fatty acid composition of the seeds.</title>
        <authorList>
            <person name="Moreno-Perez A.J."/>
            <person name="Venegas-Caleron M."/>
            <person name="Vaistij F.E."/>
            <person name="Salas J.J."/>
            <person name="Larson T.R."/>
            <person name="Garces R."/>
            <person name="Graham I.A."/>
            <person name="Martinez-Force E."/>
        </authorList>
    </citation>
    <scope>FUNCTION</scope>
</reference>
<keyword id="KW-0150">Chloroplast</keyword>
<keyword id="KW-0275">Fatty acid biosynthesis</keyword>
<keyword id="KW-0276">Fatty acid metabolism</keyword>
<keyword id="KW-0378">Hydrolase</keyword>
<keyword id="KW-0444">Lipid biosynthesis</keyword>
<keyword id="KW-0443">Lipid metabolism</keyword>
<keyword id="KW-0934">Plastid</keyword>
<keyword id="KW-1185">Reference proteome</keyword>
<keyword id="KW-0809">Transit peptide</keyword>
<proteinExistence type="evidence at transcript level"/>
<organism>
    <name type="scientific">Arabidopsis thaliana</name>
    <name type="common">Mouse-ear cress</name>
    <dbReference type="NCBI Taxonomy" id="3702"/>
    <lineage>
        <taxon>Eukaryota</taxon>
        <taxon>Viridiplantae</taxon>
        <taxon>Streptophyta</taxon>
        <taxon>Embryophyta</taxon>
        <taxon>Tracheophyta</taxon>
        <taxon>Spermatophyta</taxon>
        <taxon>Magnoliopsida</taxon>
        <taxon>eudicotyledons</taxon>
        <taxon>Gunneridae</taxon>
        <taxon>Pentapetalae</taxon>
        <taxon>rosids</taxon>
        <taxon>malvids</taxon>
        <taxon>Brassicales</taxon>
        <taxon>Brassicaceae</taxon>
        <taxon>Camelineae</taxon>
        <taxon>Arabidopsis</taxon>
    </lineage>
</organism>
<accession>Q9SV64</accession>
<accession>Q8GWU8</accession>
<dbReference type="EC" id="3.1.2.14"/>
<dbReference type="EMBL" id="AL079349">
    <property type="protein sequence ID" value="CAB45504.1"/>
    <property type="molecule type" value="Genomic_DNA"/>
</dbReference>
<dbReference type="EMBL" id="AL161535">
    <property type="protein sequence ID" value="CAB78347.1"/>
    <property type="molecule type" value="Genomic_DNA"/>
</dbReference>
<dbReference type="EMBL" id="CP002687">
    <property type="protein sequence ID" value="AEE83224.1"/>
    <property type="molecule type" value="Genomic_DNA"/>
</dbReference>
<dbReference type="EMBL" id="BT024746">
    <property type="protein sequence ID" value="ABD59084.1"/>
    <property type="molecule type" value="mRNA"/>
</dbReference>
<dbReference type="EMBL" id="AK118624">
    <property type="protein sequence ID" value="BAC43222.1"/>
    <property type="molecule type" value="mRNA"/>
</dbReference>
<dbReference type="PIR" id="T10207">
    <property type="entry name" value="T10207"/>
</dbReference>
<dbReference type="RefSeq" id="NP_193041.1">
    <property type="nucleotide sequence ID" value="NM_117374.4"/>
</dbReference>
<dbReference type="SMR" id="Q9SV64"/>
<dbReference type="FunCoup" id="Q9SV64">
    <property type="interactions" value="238"/>
</dbReference>
<dbReference type="STRING" id="3702.Q9SV64"/>
<dbReference type="PaxDb" id="3702-AT4G13050.1"/>
<dbReference type="ProteomicsDB" id="230966"/>
<dbReference type="EnsemblPlants" id="AT4G13050.1">
    <property type="protein sequence ID" value="AT4G13050.1"/>
    <property type="gene ID" value="AT4G13050"/>
</dbReference>
<dbReference type="GeneID" id="826919"/>
<dbReference type="Gramene" id="AT4G13050.1">
    <property type="protein sequence ID" value="AT4G13050.1"/>
    <property type="gene ID" value="AT4G13050"/>
</dbReference>
<dbReference type="KEGG" id="ath:AT4G13050"/>
<dbReference type="Araport" id="AT4G13050"/>
<dbReference type="TAIR" id="AT4G13050">
    <property type="gene designation" value="FATA2"/>
</dbReference>
<dbReference type="eggNOG" id="ENOG502QTE3">
    <property type="taxonomic scope" value="Eukaryota"/>
</dbReference>
<dbReference type="HOGENOM" id="CLU_045466_1_2_1"/>
<dbReference type="InParanoid" id="Q9SV64"/>
<dbReference type="OMA" id="EMETWCQ"/>
<dbReference type="OrthoDB" id="618395at2759"/>
<dbReference type="PhylomeDB" id="Q9SV64"/>
<dbReference type="BioCyc" id="ARA:AT4G13050-MONOMER"/>
<dbReference type="PRO" id="PR:Q9SV64"/>
<dbReference type="Proteomes" id="UP000006548">
    <property type="component" value="Chromosome 4"/>
</dbReference>
<dbReference type="ExpressionAtlas" id="Q9SV64">
    <property type="expression patterns" value="baseline and differential"/>
</dbReference>
<dbReference type="GO" id="GO:0009507">
    <property type="term" value="C:chloroplast"/>
    <property type="evidence" value="ECO:0007669"/>
    <property type="project" value="UniProtKB-SubCell"/>
</dbReference>
<dbReference type="GO" id="GO:0016297">
    <property type="term" value="F:fatty acyl-[ACP] hydrolase activity"/>
    <property type="evidence" value="ECO:0007669"/>
    <property type="project" value="UniProtKB-EC"/>
</dbReference>
<dbReference type="GO" id="GO:0006633">
    <property type="term" value="P:fatty acid biosynthetic process"/>
    <property type="evidence" value="ECO:0000316"/>
    <property type="project" value="UniProtKB"/>
</dbReference>
<dbReference type="CDD" id="cd00586">
    <property type="entry name" value="4HBT"/>
    <property type="match status" value="1"/>
</dbReference>
<dbReference type="FunFam" id="3.10.129.10:FF:000014">
    <property type="entry name" value="Acyl-[acyl-carrier-protein] hydrolase"/>
    <property type="match status" value="1"/>
</dbReference>
<dbReference type="Gene3D" id="3.10.129.10">
    <property type="entry name" value="Hotdog Thioesterase"/>
    <property type="match status" value="1"/>
</dbReference>
<dbReference type="InterPro" id="IPR049427">
    <property type="entry name" value="Acyl-ACP_TE_C"/>
</dbReference>
<dbReference type="InterPro" id="IPR002864">
    <property type="entry name" value="Acyl-ACP_thioesterase_NHD"/>
</dbReference>
<dbReference type="InterPro" id="IPR045023">
    <property type="entry name" value="FATA/B"/>
</dbReference>
<dbReference type="InterPro" id="IPR029069">
    <property type="entry name" value="HotDog_dom_sf"/>
</dbReference>
<dbReference type="PANTHER" id="PTHR31727">
    <property type="entry name" value="OLEOYL-ACYL CARRIER PROTEIN THIOESTERASE 1, CHLOROPLASTIC"/>
    <property type="match status" value="1"/>
</dbReference>
<dbReference type="PANTHER" id="PTHR31727:SF16">
    <property type="entry name" value="OLEOYL-ACYL CARRIER PROTEIN THIOESTERASE 2, CHLOROPLASTIC"/>
    <property type="match status" value="1"/>
</dbReference>
<dbReference type="Pfam" id="PF01643">
    <property type="entry name" value="Acyl-ACP_TE"/>
    <property type="match status" value="1"/>
</dbReference>
<dbReference type="Pfam" id="PF20791">
    <property type="entry name" value="Acyl-ACP_TE_C"/>
    <property type="match status" value="1"/>
</dbReference>
<dbReference type="SUPFAM" id="SSF54637">
    <property type="entry name" value="Thioesterase/thiol ester dehydrase-isomerase"/>
    <property type="match status" value="2"/>
</dbReference>